<name>VATA_DEIGD</name>
<gene>
    <name evidence="1" type="primary">atpA</name>
    <name type="ordered locus">Dgeo_2047</name>
</gene>
<organism>
    <name type="scientific">Deinococcus geothermalis (strain DSM 11300 / CIP 105573 / AG-3a)</name>
    <dbReference type="NCBI Taxonomy" id="319795"/>
    <lineage>
        <taxon>Bacteria</taxon>
        <taxon>Thermotogati</taxon>
        <taxon>Deinococcota</taxon>
        <taxon>Deinococci</taxon>
        <taxon>Deinococcales</taxon>
        <taxon>Deinococcaceae</taxon>
        <taxon>Deinococcus</taxon>
    </lineage>
</organism>
<keyword id="KW-0066">ATP synthesis</keyword>
<keyword id="KW-0067">ATP-binding</keyword>
<keyword id="KW-0375">Hydrogen ion transport</keyword>
<keyword id="KW-0406">Ion transport</keyword>
<keyword id="KW-0547">Nucleotide-binding</keyword>
<keyword id="KW-1278">Translocase</keyword>
<keyword id="KW-0813">Transport</keyword>
<evidence type="ECO:0000255" key="1">
    <source>
        <dbReference type="HAMAP-Rule" id="MF_00309"/>
    </source>
</evidence>
<comment type="function">
    <text evidence="1">Produces ATP from ADP in the presence of a proton gradient across the membrane. The V-type alpha chain is a catalytic subunit.</text>
</comment>
<comment type="catalytic activity">
    <reaction evidence="1">
        <text>ATP + H2O + 4 H(+)(in) = ADP + phosphate + 5 H(+)(out)</text>
        <dbReference type="Rhea" id="RHEA:57720"/>
        <dbReference type="ChEBI" id="CHEBI:15377"/>
        <dbReference type="ChEBI" id="CHEBI:15378"/>
        <dbReference type="ChEBI" id="CHEBI:30616"/>
        <dbReference type="ChEBI" id="CHEBI:43474"/>
        <dbReference type="ChEBI" id="CHEBI:456216"/>
        <dbReference type="EC" id="7.1.2.2"/>
    </reaction>
</comment>
<comment type="similarity">
    <text evidence="1">Belongs to the ATPase alpha/beta chains family.</text>
</comment>
<dbReference type="EC" id="7.1.2.2" evidence="1"/>
<dbReference type="EMBL" id="CP000359">
    <property type="protein sequence ID" value="ABF46341.1"/>
    <property type="molecule type" value="Genomic_DNA"/>
</dbReference>
<dbReference type="RefSeq" id="WP_011531167.1">
    <property type="nucleotide sequence ID" value="NC_008025.1"/>
</dbReference>
<dbReference type="SMR" id="Q1IWP3"/>
<dbReference type="STRING" id="319795.Dgeo_2047"/>
<dbReference type="KEGG" id="dge:Dgeo_2047"/>
<dbReference type="eggNOG" id="COG1155">
    <property type="taxonomic scope" value="Bacteria"/>
</dbReference>
<dbReference type="HOGENOM" id="CLU_008162_3_1_0"/>
<dbReference type="Proteomes" id="UP000002431">
    <property type="component" value="Chromosome"/>
</dbReference>
<dbReference type="GO" id="GO:0045259">
    <property type="term" value="C:proton-transporting ATP synthase complex"/>
    <property type="evidence" value="ECO:0007669"/>
    <property type="project" value="UniProtKB-ARBA"/>
</dbReference>
<dbReference type="GO" id="GO:0005524">
    <property type="term" value="F:ATP binding"/>
    <property type="evidence" value="ECO:0007669"/>
    <property type="project" value="UniProtKB-UniRule"/>
</dbReference>
<dbReference type="GO" id="GO:0046933">
    <property type="term" value="F:proton-transporting ATP synthase activity, rotational mechanism"/>
    <property type="evidence" value="ECO:0007669"/>
    <property type="project" value="UniProtKB-UniRule"/>
</dbReference>
<dbReference type="GO" id="GO:0046961">
    <property type="term" value="F:proton-transporting ATPase activity, rotational mechanism"/>
    <property type="evidence" value="ECO:0007669"/>
    <property type="project" value="InterPro"/>
</dbReference>
<dbReference type="GO" id="GO:0042777">
    <property type="term" value="P:proton motive force-driven plasma membrane ATP synthesis"/>
    <property type="evidence" value="ECO:0007669"/>
    <property type="project" value="UniProtKB-UniRule"/>
</dbReference>
<dbReference type="CDD" id="cd18111">
    <property type="entry name" value="ATP-synt_V_A-type_alpha_C"/>
    <property type="match status" value="1"/>
</dbReference>
<dbReference type="CDD" id="cd18119">
    <property type="entry name" value="ATP-synt_V_A-type_alpha_N"/>
    <property type="match status" value="1"/>
</dbReference>
<dbReference type="CDD" id="cd01134">
    <property type="entry name" value="V_A-ATPase_A"/>
    <property type="match status" value="1"/>
</dbReference>
<dbReference type="FunFam" id="2.40.30.20:FF:000002">
    <property type="entry name" value="V-type proton ATPase catalytic subunit A"/>
    <property type="match status" value="1"/>
</dbReference>
<dbReference type="FunFam" id="2.40.50.100:FF:000008">
    <property type="entry name" value="V-type proton ATPase catalytic subunit A"/>
    <property type="match status" value="1"/>
</dbReference>
<dbReference type="Gene3D" id="2.40.30.20">
    <property type="match status" value="1"/>
</dbReference>
<dbReference type="Gene3D" id="2.40.50.100">
    <property type="match status" value="1"/>
</dbReference>
<dbReference type="Gene3D" id="1.10.1140.10">
    <property type="entry name" value="Bovine Mitochondrial F1-atpase, Atp Synthase Beta Chain, Chain D, domain 3"/>
    <property type="match status" value="1"/>
</dbReference>
<dbReference type="Gene3D" id="3.40.50.300">
    <property type="entry name" value="P-loop containing nucleotide triphosphate hydrolases"/>
    <property type="match status" value="1"/>
</dbReference>
<dbReference type="HAMAP" id="MF_00309">
    <property type="entry name" value="ATP_synth_A_arch"/>
    <property type="match status" value="1"/>
</dbReference>
<dbReference type="InterPro" id="IPR055190">
    <property type="entry name" value="ATP-synt_VA_C"/>
</dbReference>
<dbReference type="InterPro" id="IPR031686">
    <property type="entry name" value="ATP-synth_a_Xtn"/>
</dbReference>
<dbReference type="InterPro" id="IPR023366">
    <property type="entry name" value="ATP_synth_asu-like_sf"/>
</dbReference>
<dbReference type="InterPro" id="IPR020003">
    <property type="entry name" value="ATPase_a/bsu_AS"/>
</dbReference>
<dbReference type="InterPro" id="IPR004100">
    <property type="entry name" value="ATPase_F1/V1/A1_a/bsu_N"/>
</dbReference>
<dbReference type="InterPro" id="IPR036121">
    <property type="entry name" value="ATPase_F1/V1/A1_a/bsu_N_sf"/>
</dbReference>
<dbReference type="InterPro" id="IPR000194">
    <property type="entry name" value="ATPase_F1/V1/A1_a/bsu_nucl-bd"/>
</dbReference>
<dbReference type="InterPro" id="IPR024034">
    <property type="entry name" value="ATPase_F1/V1_b/a_C"/>
</dbReference>
<dbReference type="InterPro" id="IPR027417">
    <property type="entry name" value="P-loop_NTPase"/>
</dbReference>
<dbReference type="InterPro" id="IPR022878">
    <property type="entry name" value="V-ATPase_asu"/>
</dbReference>
<dbReference type="NCBIfam" id="NF003220">
    <property type="entry name" value="PRK04192.1"/>
    <property type="match status" value="1"/>
</dbReference>
<dbReference type="PANTHER" id="PTHR43607:SF1">
    <property type="entry name" value="H(+)-TRANSPORTING TWO-SECTOR ATPASE"/>
    <property type="match status" value="1"/>
</dbReference>
<dbReference type="PANTHER" id="PTHR43607">
    <property type="entry name" value="V-TYPE PROTON ATPASE CATALYTIC SUBUNIT A"/>
    <property type="match status" value="1"/>
</dbReference>
<dbReference type="Pfam" id="PF00006">
    <property type="entry name" value="ATP-synt_ab"/>
    <property type="match status" value="1"/>
</dbReference>
<dbReference type="Pfam" id="PF02874">
    <property type="entry name" value="ATP-synt_ab_N"/>
    <property type="match status" value="1"/>
</dbReference>
<dbReference type="Pfam" id="PF16886">
    <property type="entry name" value="ATP-synt_ab_Xtn"/>
    <property type="match status" value="1"/>
</dbReference>
<dbReference type="Pfam" id="PF22919">
    <property type="entry name" value="ATP-synt_VA_C"/>
    <property type="match status" value="1"/>
</dbReference>
<dbReference type="SUPFAM" id="SSF47917">
    <property type="entry name" value="C-terminal domain of alpha and beta subunits of F1 ATP synthase"/>
    <property type="match status" value="1"/>
</dbReference>
<dbReference type="SUPFAM" id="SSF50615">
    <property type="entry name" value="N-terminal domain of alpha and beta subunits of F1 ATP synthase"/>
    <property type="match status" value="1"/>
</dbReference>
<dbReference type="SUPFAM" id="SSF52540">
    <property type="entry name" value="P-loop containing nucleoside triphosphate hydrolases"/>
    <property type="match status" value="1"/>
</dbReference>
<dbReference type="PROSITE" id="PS00152">
    <property type="entry name" value="ATPASE_ALPHA_BETA"/>
    <property type="match status" value="1"/>
</dbReference>
<accession>Q1IWP3</accession>
<proteinExistence type="inferred from homology"/>
<feature type="chain" id="PRO_1000059341" description="V-type ATP synthase alpha chain">
    <location>
        <begin position="1"/>
        <end position="582"/>
    </location>
</feature>
<feature type="binding site" evidence="1">
    <location>
        <begin position="231"/>
        <end position="238"/>
    </location>
    <ligand>
        <name>ATP</name>
        <dbReference type="ChEBI" id="CHEBI:30616"/>
    </ligand>
</feature>
<protein>
    <recommendedName>
        <fullName evidence="1">V-type ATP synthase alpha chain</fullName>
        <ecNumber evidence="1">7.1.2.2</ecNumber>
    </recommendedName>
    <alternativeName>
        <fullName evidence="1">V-ATPase subunit A</fullName>
    </alternativeName>
</protein>
<sequence>MTQQQRGVVQSIAGPAVIASGMYGAKMYDIVRVGKERLVGEIIRLEGNTAFVQVYEDTSGLTVGEPVETTGLPLSVELGPGMLNGIYDGIQRPLDKIREASGDFIARGIEVSSLDRTKKWAFTPTVQAGDTVGGSSILGTVPEFSFTHKILTPPDKGGRLTWVAPAGEYTIDDTIATLEDGTNLRLAHYWPVRAPRPVAQKLDPSQPFLTGMRILDVLFPLVMGGTAAIPGPFGSGKTVTQQSVAKYGNADIVVYVGCGERGNEMTDVLVEFPELEDPKTGGPLMHRTILIANTSNMPVAAREASVYTGITLAEYFRDQGYSVSLMADSTSRWAEALREISSRLEEMPAEEGYPPYLGAKLAAFYERAGAVKTLAGEDGAVSVIGAVSPAGGDMSEPVTQATLRITGAFWRLDAGLARRRHFPAINWNGSYSLFTPILDSWYRENVGRDFPELRQRISNLLQQEASLQEVVQLVGPDALQDQERLVIETGRMLRQDFLQQNGFDPVDASASMPKNYGLMKMMLKFYDEAEAALRNGVGIDEIIQNPVIEKLSRARYVPEADFMAYAESVMDELDTTFKGVKA</sequence>
<reference key="1">
    <citation type="submission" date="2006-04" db="EMBL/GenBank/DDBJ databases">
        <title>Complete sequence of chromosome of Deinococcus geothermalis DSM 11300.</title>
        <authorList>
            <person name="Copeland A."/>
            <person name="Lucas S."/>
            <person name="Lapidus A."/>
            <person name="Barry K."/>
            <person name="Detter J.C."/>
            <person name="Glavina del Rio T."/>
            <person name="Hammon N."/>
            <person name="Israni S."/>
            <person name="Dalin E."/>
            <person name="Tice H."/>
            <person name="Pitluck S."/>
            <person name="Brettin T."/>
            <person name="Bruce D."/>
            <person name="Han C."/>
            <person name="Tapia R."/>
            <person name="Saunders E."/>
            <person name="Gilna P."/>
            <person name="Schmutz J."/>
            <person name="Larimer F."/>
            <person name="Land M."/>
            <person name="Hauser L."/>
            <person name="Kyrpides N."/>
            <person name="Kim E."/>
            <person name="Daly M.J."/>
            <person name="Fredrickson J.K."/>
            <person name="Makarova K.S."/>
            <person name="Gaidamakova E.K."/>
            <person name="Zhai M."/>
            <person name="Richardson P."/>
        </authorList>
    </citation>
    <scope>NUCLEOTIDE SEQUENCE [LARGE SCALE GENOMIC DNA]</scope>
    <source>
        <strain>DSM 11300 / CIP 105573 / AG-3a</strain>
    </source>
</reference>